<sequence length="719" mass="81410">METSALLKQQIAKEIGLSQKHVESVIRLLEDGNTVPFIARYRKEQTGSMDEVQIQTISERWQYIQNLNQRKEEVIRLIAEQDKLTDNLKRKIEQSVKLQEVEDLYRPYKQKRKTKATVAKSKGLEPLADYILTLPQDDHLAATADQYISEEKEVFTREEAIEGAKHIIAEQISDEPTFRKWIRQETFKRGTIKSAAGKSADTDEKNVYEMYYEYEEPIAKVVPHRVLAMNRGEKEDILKVAIEPPADHIKAYLEKQIIKNRSTSVREILQETIEDSYKRLIQPAIEREIRKELSEKADEQAIHIFSENLRKLLLQPPMKGKTVLGVDPAFRTGCKLAVSDETGKVLKIDVIYPHAPVNKTKEAHEKVKKILEQYQVEMVAIGNGTASRETEQFIVNVLRDMPRKIYYVIVNEAGASVYSASELAREEFPDLKVEERSAVSIARRLQDPLAELVKIDPKSVGVGQYQHDVSQKRLNESLRFVVETVVNQVGVNVNTASAALLQYVAGLSKSVAGNVVKKREEIGKFSNRKELKDIPRLGAKTYEQCIGFLRVQEGTEPLDRTGIHPESYKETKALLKKLGLSTEHIGTAELKDKINQLALSETAKELGIGEITLKDICEQLTRPERDPRDKVPKPLLKTDVLQLEDLKEGMELQGTVRNVVDFGAFVDIGVKQDGLVHISKLSNQFVKHPLDVVSVGDIVTVWVDGVDVQKGRVSLSMVK</sequence>
<reference key="1">
    <citation type="submission" date="1997-03" db="EMBL/GenBank/DDBJ databases">
        <title>A 148 kbp sequence of the region between 35 and 47 degree of the Bacillus subtilis genome.</title>
        <authorList>
            <person name="Kasahara Y."/>
            <person name="Nakai S."/>
            <person name="Lee S."/>
            <person name="Sadaie Y."/>
            <person name="Ogasawara N."/>
        </authorList>
    </citation>
    <scope>NUCLEOTIDE SEQUENCE [GENOMIC DNA]</scope>
    <source>
        <strain>168</strain>
    </source>
</reference>
<reference key="2">
    <citation type="journal article" date="1997" name="Nature">
        <title>The complete genome sequence of the Gram-positive bacterium Bacillus subtilis.</title>
        <authorList>
            <person name="Kunst F."/>
            <person name="Ogasawara N."/>
            <person name="Moszer I."/>
            <person name="Albertini A.M."/>
            <person name="Alloni G."/>
            <person name="Azevedo V."/>
            <person name="Bertero M.G."/>
            <person name="Bessieres P."/>
            <person name="Bolotin A."/>
            <person name="Borchert S."/>
            <person name="Borriss R."/>
            <person name="Boursier L."/>
            <person name="Brans A."/>
            <person name="Braun M."/>
            <person name="Brignell S.C."/>
            <person name="Bron S."/>
            <person name="Brouillet S."/>
            <person name="Bruschi C.V."/>
            <person name="Caldwell B."/>
            <person name="Capuano V."/>
            <person name="Carter N.M."/>
            <person name="Choi S.-K."/>
            <person name="Codani J.-J."/>
            <person name="Connerton I.F."/>
            <person name="Cummings N.J."/>
            <person name="Daniel R.A."/>
            <person name="Denizot F."/>
            <person name="Devine K.M."/>
            <person name="Duesterhoeft A."/>
            <person name="Ehrlich S.D."/>
            <person name="Emmerson P.T."/>
            <person name="Entian K.-D."/>
            <person name="Errington J."/>
            <person name="Fabret C."/>
            <person name="Ferrari E."/>
            <person name="Foulger D."/>
            <person name="Fritz C."/>
            <person name="Fujita M."/>
            <person name="Fujita Y."/>
            <person name="Fuma S."/>
            <person name="Galizzi A."/>
            <person name="Galleron N."/>
            <person name="Ghim S.-Y."/>
            <person name="Glaser P."/>
            <person name="Goffeau A."/>
            <person name="Golightly E.J."/>
            <person name="Grandi G."/>
            <person name="Guiseppi G."/>
            <person name="Guy B.J."/>
            <person name="Haga K."/>
            <person name="Haiech J."/>
            <person name="Harwood C.R."/>
            <person name="Henaut A."/>
            <person name="Hilbert H."/>
            <person name="Holsappel S."/>
            <person name="Hosono S."/>
            <person name="Hullo M.-F."/>
            <person name="Itaya M."/>
            <person name="Jones L.-M."/>
            <person name="Joris B."/>
            <person name="Karamata D."/>
            <person name="Kasahara Y."/>
            <person name="Klaerr-Blanchard M."/>
            <person name="Klein C."/>
            <person name="Kobayashi Y."/>
            <person name="Koetter P."/>
            <person name="Koningstein G."/>
            <person name="Krogh S."/>
            <person name="Kumano M."/>
            <person name="Kurita K."/>
            <person name="Lapidus A."/>
            <person name="Lardinois S."/>
            <person name="Lauber J."/>
            <person name="Lazarevic V."/>
            <person name="Lee S.-M."/>
            <person name="Levine A."/>
            <person name="Liu H."/>
            <person name="Masuda S."/>
            <person name="Mauel C."/>
            <person name="Medigue C."/>
            <person name="Medina N."/>
            <person name="Mellado R.P."/>
            <person name="Mizuno M."/>
            <person name="Moestl D."/>
            <person name="Nakai S."/>
            <person name="Noback M."/>
            <person name="Noone D."/>
            <person name="O'Reilly M."/>
            <person name="Ogawa K."/>
            <person name="Ogiwara A."/>
            <person name="Oudega B."/>
            <person name="Park S.-H."/>
            <person name="Parro V."/>
            <person name="Pohl T.M."/>
            <person name="Portetelle D."/>
            <person name="Porwollik S."/>
            <person name="Prescott A.M."/>
            <person name="Presecan E."/>
            <person name="Pujic P."/>
            <person name="Purnelle B."/>
            <person name="Rapoport G."/>
            <person name="Rey M."/>
            <person name="Reynolds S."/>
            <person name="Rieger M."/>
            <person name="Rivolta C."/>
            <person name="Rocha E."/>
            <person name="Roche B."/>
            <person name="Rose M."/>
            <person name="Sadaie Y."/>
            <person name="Sato T."/>
            <person name="Scanlan E."/>
            <person name="Schleich S."/>
            <person name="Schroeter R."/>
            <person name="Scoffone F."/>
            <person name="Sekiguchi J."/>
            <person name="Sekowska A."/>
            <person name="Seror S.J."/>
            <person name="Serror P."/>
            <person name="Shin B.-S."/>
            <person name="Soldo B."/>
            <person name="Sorokin A."/>
            <person name="Tacconi E."/>
            <person name="Takagi T."/>
            <person name="Takahashi H."/>
            <person name="Takemaru K."/>
            <person name="Takeuchi M."/>
            <person name="Tamakoshi A."/>
            <person name="Tanaka T."/>
            <person name="Terpstra P."/>
            <person name="Tognoni A."/>
            <person name="Tosato V."/>
            <person name="Uchiyama S."/>
            <person name="Vandenbol M."/>
            <person name="Vannier F."/>
            <person name="Vassarotti A."/>
            <person name="Viari A."/>
            <person name="Wambutt R."/>
            <person name="Wedler E."/>
            <person name="Wedler H."/>
            <person name="Weitzenegger T."/>
            <person name="Winters P."/>
            <person name="Wipat A."/>
            <person name="Yamamoto H."/>
            <person name="Yamane K."/>
            <person name="Yasumoto K."/>
            <person name="Yata K."/>
            <person name="Yoshida K."/>
            <person name="Yoshikawa H.-F."/>
            <person name="Zumstein E."/>
            <person name="Yoshikawa H."/>
            <person name="Danchin A."/>
        </authorList>
    </citation>
    <scope>NUCLEOTIDE SEQUENCE [LARGE SCALE GENOMIC DNA]</scope>
    <source>
        <strain>168</strain>
    </source>
</reference>
<reference key="3">
    <citation type="journal article" date="2009" name="Microbiology">
        <title>From a consortium sequence to a unified sequence: the Bacillus subtilis 168 reference genome a decade later.</title>
        <authorList>
            <person name="Barbe V."/>
            <person name="Cruveiller S."/>
            <person name="Kunst F."/>
            <person name="Lenoble P."/>
            <person name="Meurice G."/>
            <person name="Sekowska A."/>
            <person name="Vallenet D."/>
            <person name="Wang T."/>
            <person name="Moszer I."/>
            <person name="Medigue C."/>
            <person name="Danchin A."/>
        </authorList>
    </citation>
    <scope>SEQUENCE REVISION TO C-TERMINUS</scope>
</reference>
<evidence type="ECO:0000255" key="1"/>
<evidence type="ECO:0000255" key="2">
    <source>
        <dbReference type="PROSITE-ProRule" id="PRU00180"/>
    </source>
</evidence>
<evidence type="ECO:0000305" key="3"/>
<proteinExistence type="predicted"/>
<protein>
    <recommendedName>
        <fullName>Uncharacterized protein YdcI</fullName>
    </recommendedName>
</protein>
<comment type="caution">
    <text evidence="3">Was originally (Ref.1) thought to be two genes, ydcI and ydcJ.</text>
</comment>
<comment type="sequence caution" evidence="3">
    <conflict type="frameshift">
        <sequence resource="EMBL-CDS" id="BAA19315"/>
    </conflict>
</comment>
<comment type="sequence caution" evidence="3">
    <conflict type="erroneous initiation">
        <sequence resource="EMBL-CDS" id="BAA19316"/>
    </conflict>
    <text>Truncated N-terminus.</text>
</comment>
<comment type="sequence caution" evidence="3">
    <conflict type="frameshift">
        <sequence resource="EMBL-CDS" id="BAA19316"/>
    </conflict>
</comment>
<name>YDCI_BACSU</name>
<dbReference type="EMBL" id="AB001488">
    <property type="protein sequence ID" value="BAA19315.1"/>
    <property type="status" value="ALT_FRAME"/>
    <property type="molecule type" value="Genomic_DNA"/>
</dbReference>
<dbReference type="EMBL" id="AB001488">
    <property type="protein sequence ID" value="BAA19316.1"/>
    <property type="status" value="ALT_SEQ"/>
    <property type="molecule type" value="Genomic_DNA"/>
</dbReference>
<dbReference type="EMBL" id="AL009126">
    <property type="protein sequence ID" value="CAB12285.2"/>
    <property type="molecule type" value="Genomic_DNA"/>
</dbReference>
<dbReference type="PIR" id="G69773">
    <property type="entry name" value="G69773"/>
</dbReference>
<dbReference type="RefSeq" id="WP_003246556.1">
    <property type="nucleotide sequence ID" value="NZ_OZ025638.1"/>
</dbReference>
<dbReference type="SMR" id="O31489"/>
<dbReference type="FunCoup" id="O31489">
    <property type="interactions" value="480"/>
</dbReference>
<dbReference type="STRING" id="224308.BSU04780"/>
<dbReference type="jPOST" id="O31489"/>
<dbReference type="PaxDb" id="224308-BSU04780"/>
<dbReference type="EnsemblBacteria" id="CAB12285">
    <property type="protein sequence ID" value="CAB12285"/>
    <property type="gene ID" value="BSU_04780"/>
</dbReference>
<dbReference type="GeneID" id="939932"/>
<dbReference type="KEGG" id="bsu:BSU04780"/>
<dbReference type="PATRIC" id="fig|224308.179.peg.507"/>
<dbReference type="eggNOG" id="COG2183">
    <property type="taxonomic scope" value="Bacteria"/>
</dbReference>
<dbReference type="InParanoid" id="O31489"/>
<dbReference type="OrthoDB" id="9804714at2"/>
<dbReference type="PhylomeDB" id="O31489"/>
<dbReference type="BioCyc" id="BSUB:BSU04780-MONOMER"/>
<dbReference type="Proteomes" id="UP000001570">
    <property type="component" value="Chromosome"/>
</dbReference>
<dbReference type="GO" id="GO:0003729">
    <property type="term" value="F:mRNA binding"/>
    <property type="evidence" value="ECO:0000318"/>
    <property type="project" value="GO_Central"/>
</dbReference>
<dbReference type="GO" id="GO:0003735">
    <property type="term" value="F:structural constituent of ribosome"/>
    <property type="evidence" value="ECO:0000318"/>
    <property type="project" value="GO_Central"/>
</dbReference>
<dbReference type="GO" id="GO:0006139">
    <property type="term" value="P:nucleobase-containing compound metabolic process"/>
    <property type="evidence" value="ECO:0007669"/>
    <property type="project" value="InterPro"/>
</dbReference>
<dbReference type="GO" id="GO:0006412">
    <property type="term" value="P:translation"/>
    <property type="evidence" value="ECO:0000318"/>
    <property type="project" value="GO_Central"/>
</dbReference>
<dbReference type="CDD" id="cd05685">
    <property type="entry name" value="S1_Tex"/>
    <property type="match status" value="1"/>
</dbReference>
<dbReference type="FunFam" id="1.10.150.310:FF:000001">
    <property type="entry name" value="RNA-binding transcriptional accessory protein"/>
    <property type="match status" value="1"/>
</dbReference>
<dbReference type="FunFam" id="2.40.50.140:FF:000051">
    <property type="entry name" value="RNA-binding transcriptional accessory protein"/>
    <property type="match status" value="1"/>
</dbReference>
<dbReference type="FunFam" id="3.30.420.140:FF:000001">
    <property type="entry name" value="RNA-binding transcriptional accessory protein"/>
    <property type="match status" value="1"/>
</dbReference>
<dbReference type="FunFam" id="1.10.10.650:FF:000001">
    <property type="entry name" value="S1 RNA-binding domain 1"/>
    <property type="match status" value="1"/>
</dbReference>
<dbReference type="Gene3D" id="2.40.50.140">
    <property type="entry name" value="Nucleic acid-binding proteins"/>
    <property type="match status" value="1"/>
</dbReference>
<dbReference type="Gene3D" id="1.10.10.650">
    <property type="entry name" value="RuvA domain 2-like"/>
    <property type="match status" value="1"/>
</dbReference>
<dbReference type="Gene3D" id="1.10.3500.10">
    <property type="entry name" value="Tex N-terminal region-like"/>
    <property type="match status" value="1"/>
</dbReference>
<dbReference type="Gene3D" id="1.10.150.310">
    <property type="entry name" value="Tex RuvX-like domain-like"/>
    <property type="match status" value="1"/>
</dbReference>
<dbReference type="Gene3D" id="3.30.420.140">
    <property type="entry name" value="YqgF/RNase H-like domain"/>
    <property type="match status" value="1"/>
</dbReference>
<dbReference type="InterPro" id="IPR041692">
    <property type="entry name" value="HHH_9"/>
</dbReference>
<dbReference type="InterPro" id="IPR012340">
    <property type="entry name" value="NA-bd_OB-fold"/>
</dbReference>
<dbReference type="InterPro" id="IPR050437">
    <property type="entry name" value="Ribos_protein_bS1-like"/>
</dbReference>
<dbReference type="InterPro" id="IPR012337">
    <property type="entry name" value="RNaseH-like_sf"/>
</dbReference>
<dbReference type="InterPro" id="IPR010994">
    <property type="entry name" value="RuvA_2-like"/>
</dbReference>
<dbReference type="InterPro" id="IPR003029">
    <property type="entry name" value="S1_domain"/>
</dbReference>
<dbReference type="InterPro" id="IPR044146">
    <property type="entry name" value="S1_Tex"/>
</dbReference>
<dbReference type="InterPro" id="IPR055179">
    <property type="entry name" value="Tex-like_central_region"/>
</dbReference>
<dbReference type="InterPro" id="IPR023323">
    <property type="entry name" value="Tex-like_dom_sf"/>
</dbReference>
<dbReference type="InterPro" id="IPR023319">
    <property type="entry name" value="Tex-like_HTH_dom_sf"/>
</dbReference>
<dbReference type="InterPro" id="IPR018974">
    <property type="entry name" value="Tex-like_N"/>
</dbReference>
<dbReference type="InterPro" id="IPR032639">
    <property type="entry name" value="Tex_YqgF"/>
</dbReference>
<dbReference type="InterPro" id="IPR006641">
    <property type="entry name" value="YqgF/RNaseH-like_dom"/>
</dbReference>
<dbReference type="InterPro" id="IPR037027">
    <property type="entry name" value="YqgF/RNaseH-like_dom_sf"/>
</dbReference>
<dbReference type="PANTHER" id="PTHR10724">
    <property type="entry name" value="30S RIBOSOMAL PROTEIN S1"/>
    <property type="match status" value="1"/>
</dbReference>
<dbReference type="PANTHER" id="PTHR10724:SF10">
    <property type="entry name" value="S1 RNA-BINDING DOMAIN-CONTAINING PROTEIN 1"/>
    <property type="match status" value="1"/>
</dbReference>
<dbReference type="Pfam" id="PF12836">
    <property type="entry name" value="HHH_3"/>
    <property type="match status" value="1"/>
</dbReference>
<dbReference type="Pfam" id="PF17674">
    <property type="entry name" value="HHH_9"/>
    <property type="match status" value="1"/>
</dbReference>
<dbReference type="Pfam" id="PF00575">
    <property type="entry name" value="S1"/>
    <property type="match status" value="1"/>
</dbReference>
<dbReference type="Pfam" id="PF22706">
    <property type="entry name" value="Tex_central_region"/>
    <property type="match status" value="1"/>
</dbReference>
<dbReference type="Pfam" id="PF09371">
    <property type="entry name" value="Tex_N"/>
    <property type="match status" value="1"/>
</dbReference>
<dbReference type="Pfam" id="PF16921">
    <property type="entry name" value="Tex_YqgF"/>
    <property type="match status" value="1"/>
</dbReference>
<dbReference type="SMART" id="SM00316">
    <property type="entry name" value="S1"/>
    <property type="match status" value="1"/>
</dbReference>
<dbReference type="SMART" id="SM00732">
    <property type="entry name" value="YqgFc"/>
    <property type="match status" value="1"/>
</dbReference>
<dbReference type="SUPFAM" id="SSF50249">
    <property type="entry name" value="Nucleic acid-binding proteins"/>
    <property type="match status" value="1"/>
</dbReference>
<dbReference type="SUPFAM" id="SSF53098">
    <property type="entry name" value="Ribonuclease H-like"/>
    <property type="match status" value="1"/>
</dbReference>
<dbReference type="SUPFAM" id="SSF47781">
    <property type="entry name" value="RuvA domain 2-like"/>
    <property type="match status" value="2"/>
</dbReference>
<dbReference type="SUPFAM" id="SSF158832">
    <property type="entry name" value="Tex N-terminal region-like"/>
    <property type="match status" value="1"/>
</dbReference>
<dbReference type="PROSITE" id="PS50126">
    <property type="entry name" value="S1"/>
    <property type="match status" value="1"/>
</dbReference>
<organism>
    <name type="scientific">Bacillus subtilis (strain 168)</name>
    <dbReference type="NCBI Taxonomy" id="224308"/>
    <lineage>
        <taxon>Bacteria</taxon>
        <taxon>Bacillati</taxon>
        <taxon>Bacillota</taxon>
        <taxon>Bacilli</taxon>
        <taxon>Bacillales</taxon>
        <taxon>Bacillaceae</taxon>
        <taxon>Bacillus</taxon>
    </lineage>
</organism>
<keyword id="KW-0175">Coiled coil</keyword>
<keyword id="KW-1185">Reference proteome</keyword>
<feature type="chain" id="PRO_0000388341" description="Uncharacterized protein YdcI">
    <location>
        <begin position="1"/>
        <end position="719"/>
    </location>
</feature>
<feature type="domain" description="S1 motif" evidence="2">
    <location>
        <begin position="649"/>
        <end position="718"/>
    </location>
</feature>
<feature type="coiled-coil region" evidence="1">
    <location>
        <begin position="64"/>
        <end position="100"/>
    </location>
</feature>
<gene>
    <name type="primary">ydcI</name>
    <name type="synonym">ydcJ</name>
    <name type="ordered locus">BSU04780</name>
</gene>
<accession>O31489</accession>
<accession>P96626</accession>
<accession>P96627</accession>